<reference key="1">
    <citation type="journal article" date="1998" name="DNA Res.">
        <title>Structural analysis of Arabidopsis thaliana chromosome 5. VI. Sequence features of the regions of 1,367,185 bp covered by 19 physically assigned P1 and TAC clones.</title>
        <authorList>
            <person name="Kotani H."/>
            <person name="Nakamura Y."/>
            <person name="Sato S."/>
            <person name="Asamizu E."/>
            <person name="Kaneko T."/>
            <person name="Miyajima N."/>
            <person name="Tabata S."/>
        </authorList>
    </citation>
    <scope>NUCLEOTIDE SEQUENCE [LARGE SCALE GENOMIC DNA]</scope>
    <source>
        <strain>cv. Columbia</strain>
    </source>
</reference>
<reference key="2">
    <citation type="journal article" date="2017" name="Plant J.">
        <title>Araport11: a complete reannotation of the Arabidopsis thaliana reference genome.</title>
        <authorList>
            <person name="Cheng C.Y."/>
            <person name="Krishnakumar V."/>
            <person name="Chan A.P."/>
            <person name="Thibaud-Nissen F."/>
            <person name="Schobel S."/>
            <person name="Town C.D."/>
        </authorList>
    </citation>
    <scope>GENOME REANNOTATION</scope>
    <source>
        <strain>cv. Columbia</strain>
    </source>
</reference>
<reference key="3">
    <citation type="submission" date="2004-09" db="EMBL/GenBank/DDBJ databases">
        <title>Large-scale analysis of RIKEN Arabidopsis full-length (RAFL) cDNAs.</title>
        <authorList>
            <person name="Totoki Y."/>
            <person name="Seki M."/>
            <person name="Ishida J."/>
            <person name="Nakajima M."/>
            <person name="Enju A."/>
            <person name="Kamiya A."/>
            <person name="Narusaka M."/>
            <person name="Shin-i T."/>
            <person name="Nakagawa M."/>
            <person name="Sakamoto N."/>
            <person name="Oishi K."/>
            <person name="Kohara Y."/>
            <person name="Kobayashi M."/>
            <person name="Toyoda A."/>
            <person name="Sakaki Y."/>
            <person name="Sakurai T."/>
            <person name="Iida K."/>
            <person name="Akiyama K."/>
            <person name="Satou M."/>
            <person name="Toyoda T."/>
            <person name="Konagaya A."/>
            <person name="Carninci P."/>
            <person name="Kawai J."/>
            <person name="Hayashizaki Y."/>
            <person name="Shinozaki K."/>
        </authorList>
    </citation>
    <scope>NUCLEOTIDE SEQUENCE [LARGE SCALE MRNA] (ISOFORM 1)</scope>
    <source>
        <strain>cv. Columbia</strain>
    </source>
</reference>
<reference key="4">
    <citation type="journal article" date="2007" name="J. Biol. Chem.">
        <title>Plastidic phosphatidic acid phosphatases identified in a distinct subfamily of lipid phosphate phosphatases with prokaryotic origin.</title>
        <authorList>
            <person name="Nakamura Y."/>
            <person name="Tsuchiya M."/>
            <person name="Ohta H."/>
        </authorList>
    </citation>
    <scope>FUNCTION</scope>
    <scope>ACTIVITY REGULATION</scope>
    <scope>BIOPHYSICOCHEMICAL PROPERTIES</scope>
    <scope>SUBCELLULAR LOCATION</scope>
    <scope>TISSUE SPECIFICITY</scope>
    <scope>DISRUPTION PHENOTYPE</scope>
</reference>
<proteinExistence type="evidence at protein level"/>
<organism>
    <name type="scientific">Arabidopsis thaliana</name>
    <name type="common">Mouse-ear cress</name>
    <dbReference type="NCBI Taxonomy" id="3702"/>
    <lineage>
        <taxon>Eukaryota</taxon>
        <taxon>Viridiplantae</taxon>
        <taxon>Streptophyta</taxon>
        <taxon>Embryophyta</taxon>
        <taxon>Tracheophyta</taxon>
        <taxon>Spermatophyta</taxon>
        <taxon>Magnoliopsida</taxon>
        <taxon>eudicotyledons</taxon>
        <taxon>Gunneridae</taxon>
        <taxon>Pentapetalae</taxon>
        <taxon>rosids</taxon>
        <taxon>malvids</taxon>
        <taxon>Brassicales</taxon>
        <taxon>Brassicaceae</taxon>
        <taxon>Camelineae</taxon>
        <taxon>Arabidopsis</taxon>
    </lineage>
</organism>
<protein>
    <recommendedName>
        <fullName>Lipid phosphate phosphatase epsilon 2, chloroplastic</fullName>
        <shortName>AtLPPE2</shortName>
        <ecNumber>3.1.3.-</ecNumber>
    </recommendedName>
    <alternativeName>
        <fullName>Phosphatidic acid phosphatase epsilon 2</fullName>
    </alternativeName>
    <alternativeName>
        <fullName>Plastidic phosphatidic acid phosphatase epsilon 2</fullName>
    </alternativeName>
</protein>
<comment type="function">
    <text evidence="2">Exhibits phosphatidate phosphatase (PAP) activity in vitro. May play a secondary role as PAP in plastids.</text>
</comment>
<comment type="activity regulation">
    <text evidence="2">Inhibited by Mg(2+).</text>
</comment>
<comment type="biophysicochemical properties">
    <phDependence>
        <text evidence="2">Optimum pH is 7.0.</text>
    </phDependence>
</comment>
<comment type="subcellular location">
    <subcellularLocation>
        <location evidence="4">Plastid</location>
        <location evidence="4">Chloroplast inner membrane</location>
        <topology evidence="4">Multi-pass membrane protein</topology>
    </subcellularLocation>
</comment>
<comment type="alternative products">
    <event type="alternative splicing"/>
    <isoform>
        <id>Q6NQL6-1</id>
        <name>1</name>
        <sequence type="displayed"/>
    </isoform>
    <isoform>
        <id>Q6NQL6-2</id>
        <name>2</name>
        <sequence type="described" ref="VSP_053604"/>
    </isoform>
</comment>
<comment type="tissue specificity">
    <text evidence="2">Expressed in root tips, root branch points, cotyledons and leaves.</text>
</comment>
<comment type="disruption phenotype">
    <text evidence="2">No visible phenotype under normal growth conditions.</text>
</comment>
<comment type="similarity">
    <text evidence="3">Belongs to the PA-phosphatase related phosphoesterase family.</text>
</comment>
<accession>Q6NQL6</accession>
<accession>Q9FJZ4</accession>
<gene>
    <name type="primary">LPPE2</name>
    <name type="ordered locus">At5g66450</name>
    <name type="ORF">K1F13.10</name>
</gene>
<name>LPPE2_ARATH</name>
<evidence type="ECO:0000255" key="1"/>
<evidence type="ECO:0000269" key="2">
    <source>
    </source>
</evidence>
<evidence type="ECO:0000305" key="3"/>
<evidence type="ECO:0000305" key="4">
    <source>
    </source>
</evidence>
<dbReference type="EC" id="3.1.3.-"/>
<dbReference type="EMBL" id="AB013389">
    <property type="protein sequence ID" value="BAB10921.1"/>
    <property type="molecule type" value="Genomic_DNA"/>
</dbReference>
<dbReference type="EMBL" id="CP002688">
    <property type="protein sequence ID" value="AED98215.1"/>
    <property type="molecule type" value="Genomic_DNA"/>
</dbReference>
<dbReference type="EMBL" id="CP002688">
    <property type="protein sequence ID" value="AED98216.1"/>
    <property type="molecule type" value="Genomic_DNA"/>
</dbReference>
<dbReference type="EMBL" id="CP002688">
    <property type="protein sequence ID" value="ANM70312.1"/>
    <property type="molecule type" value="Genomic_DNA"/>
</dbReference>
<dbReference type="EMBL" id="BT010436">
    <property type="protein sequence ID" value="AAQ62437.1"/>
    <property type="molecule type" value="mRNA"/>
</dbReference>
<dbReference type="EMBL" id="AK175761">
    <property type="protein sequence ID" value="BAD43524.1"/>
    <property type="molecule type" value="mRNA"/>
</dbReference>
<dbReference type="RefSeq" id="NP_001078807.1">
    <molecule id="Q6NQL6-2"/>
    <property type="nucleotide sequence ID" value="NM_001085338.1"/>
</dbReference>
<dbReference type="RefSeq" id="NP_001331934.1">
    <molecule id="Q6NQL6-1"/>
    <property type="nucleotide sequence ID" value="NM_001345762.1"/>
</dbReference>
<dbReference type="RefSeq" id="NP_201446.2">
    <molecule id="Q6NQL6-1"/>
    <property type="nucleotide sequence ID" value="NM_126043.3"/>
</dbReference>
<dbReference type="BioGRID" id="22019">
    <property type="interactions" value="1"/>
</dbReference>
<dbReference type="FunCoup" id="Q6NQL6">
    <property type="interactions" value="294"/>
</dbReference>
<dbReference type="STRING" id="3702.Q6NQL6"/>
<dbReference type="PaxDb" id="3702-AT5G66450.1"/>
<dbReference type="EnsemblPlants" id="AT5G66450.1">
    <molecule id="Q6NQL6-1"/>
    <property type="protein sequence ID" value="AT5G66450.1"/>
    <property type="gene ID" value="AT5G66450"/>
</dbReference>
<dbReference type="EnsemblPlants" id="AT5G66450.2">
    <molecule id="Q6NQL6-2"/>
    <property type="protein sequence ID" value="AT5G66450.2"/>
    <property type="gene ID" value="AT5G66450"/>
</dbReference>
<dbReference type="EnsemblPlants" id="AT5G66450.4">
    <molecule id="Q6NQL6-1"/>
    <property type="protein sequence ID" value="AT5G66450.4"/>
    <property type="gene ID" value="AT5G66450"/>
</dbReference>
<dbReference type="GeneID" id="836777"/>
<dbReference type="Gramene" id="AT5G66450.1">
    <molecule id="Q6NQL6-1"/>
    <property type="protein sequence ID" value="AT5G66450.1"/>
    <property type="gene ID" value="AT5G66450"/>
</dbReference>
<dbReference type="Gramene" id="AT5G66450.2">
    <molecule id="Q6NQL6-2"/>
    <property type="protein sequence ID" value="AT5G66450.2"/>
    <property type="gene ID" value="AT5G66450"/>
</dbReference>
<dbReference type="Gramene" id="AT5G66450.4">
    <molecule id="Q6NQL6-1"/>
    <property type="protein sequence ID" value="AT5G66450.4"/>
    <property type="gene ID" value="AT5G66450"/>
</dbReference>
<dbReference type="KEGG" id="ath:AT5G66450"/>
<dbReference type="Araport" id="AT5G66450"/>
<dbReference type="TAIR" id="AT5G66450">
    <property type="gene designation" value="LPPEPSILON2"/>
</dbReference>
<dbReference type="eggNOG" id="KOG3146">
    <property type="taxonomic scope" value="Eukaryota"/>
</dbReference>
<dbReference type="HOGENOM" id="CLU_087422_1_0_1"/>
<dbReference type="InParanoid" id="Q6NQL6"/>
<dbReference type="PhylomeDB" id="Q6NQL6"/>
<dbReference type="BRENDA" id="3.1.3.4">
    <property type="organism ID" value="399"/>
</dbReference>
<dbReference type="PRO" id="PR:Q6NQL6"/>
<dbReference type="Proteomes" id="UP000006548">
    <property type="component" value="Chromosome 5"/>
</dbReference>
<dbReference type="ExpressionAtlas" id="Q6NQL6">
    <property type="expression patterns" value="baseline and differential"/>
</dbReference>
<dbReference type="GO" id="GO:0009507">
    <property type="term" value="C:chloroplast"/>
    <property type="evidence" value="ECO:0000314"/>
    <property type="project" value="TAIR"/>
</dbReference>
<dbReference type="GO" id="GO:0009706">
    <property type="term" value="C:chloroplast inner membrane"/>
    <property type="evidence" value="ECO:0007669"/>
    <property type="project" value="UniProtKB-SubCell"/>
</dbReference>
<dbReference type="GO" id="GO:0008195">
    <property type="term" value="F:phosphatidate phosphatase activity"/>
    <property type="evidence" value="ECO:0000314"/>
    <property type="project" value="TAIR"/>
</dbReference>
<dbReference type="GO" id="GO:0006651">
    <property type="term" value="P:diacylglycerol biosynthetic process"/>
    <property type="evidence" value="ECO:0000314"/>
    <property type="project" value="TAIR"/>
</dbReference>
<dbReference type="CDD" id="cd03382">
    <property type="entry name" value="PAP2_dolichyldiphosphatase"/>
    <property type="match status" value="1"/>
</dbReference>
<dbReference type="InterPro" id="IPR039667">
    <property type="entry name" value="Dolichyldiphosphatase_PAP2"/>
</dbReference>
<dbReference type="InterPro" id="IPR036938">
    <property type="entry name" value="P_Acid_Pase_2/haloperoxi_sf"/>
</dbReference>
<dbReference type="InterPro" id="IPR000326">
    <property type="entry name" value="P_Acid_Pase_2/haloperoxidase"/>
</dbReference>
<dbReference type="PANTHER" id="PTHR11247:SF77">
    <property type="entry name" value="LIPID PHOSPHATE PHOSPHATASE EPSILON 2, CHLOROPLASTIC"/>
    <property type="match status" value="1"/>
</dbReference>
<dbReference type="PANTHER" id="PTHR11247">
    <property type="entry name" value="PALMITOYL-PROTEIN THIOESTERASE/DOLICHYLDIPHOSPHATASE 1"/>
    <property type="match status" value="1"/>
</dbReference>
<dbReference type="SMART" id="SM00014">
    <property type="entry name" value="acidPPc"/>
    <property type="match status" value="1"/>
</dbReference>
<dbReference type="SUPFAM" id="SSF48317">
    <property type="entry name" value="Acid phosphatase/Vanadium-dependent haloperoxidase"/>
    <property type="match status" value="1"/>
</dbReference>
<sequence>MAASSSSLLLLHKPTYNFHFAASSVPTYINSARFRISSSIFPLDRRRRRRIWSVSGFKSMADLVKTNARRDGEDRFQALEQEAFISNSSSELQNELVSDAGDGIEAIANRLSKWIVAALFGSVLLLRHDGAALWAVIGSVSNSVLSVALKRILNQERPVATLRSDPGMPSSHAQSISFISVFSVFSVMEWLGTNVLSLFLSGFILALGSYFTWLRVSQKLHTTSQVVVGAIVGSVYSTLWYVTWNSLVLEAFTSTFSVQIALFLVAAASALGFAVYVLLNWFKDDR</sequence>
<feature type="transit peptide" description="Chloroplast" evidence="1">
    <location>
        <begin position="1"/>
        <end position="60"/>
    </location>
</feature>
<feature type="chain" id="PRO_0000425228" description="Lipid phosphate phosphatase epsilon 2, chloroplastic">
    <location>
        <begin position="61"/>
        <end position="286"/>
    </location>
</feature>
<feature type="transmembrane region" description="Helical" evidence="1">
    <location>
        <begin position="133"/>
        <end position="149"/>
    </location>
</feature>
<feature type="transmembrane region" description="Helical" evidence="1">
    <location>
        <begin position="173"/>
        <end position="193"/>
    </location>
</feature>
<feature type="transmembrane region" description="Helical" evidence="1">
    <location>
        <begin position="194"/>
        <end position="214"/>
    </location>
</feature>
<feature type="transmembrane region" description="Helical" evidence="1">
    <location>
        <begin position="226"/>
        <end position="246"/>
    </location>
</feature>
<feature type="transmembrane region" description="Helical" evidence="1">
    <location>
        <begin position="260"/>
        <end position="280"/>
    </location>
</feature>
<feature type="splice variant" id="VSP_053604" description="In isoform 2." evidence="3">
    <location>
        <begin position="1"/>
        <end position="59"/>
    </location>
</feature>
<keyword id="KW-0025">Alternative splicing</keyword>
<keyword id="KW-0150">Chloroplast</keyword>
<keyword id="KW-0378">Hydrolase</keyword>
<keyword id="KW-0472">Membrane</keyword>
<keyword id="KW-0934">Plastid</keyword>
<keyword id="KW-1001">Plastid inner membrane</keyword>
<keyword id="KW-1185">Reference proteome</keyword>
<keyword id="KW-0809">Transit peptide</keyword>
<keyword id="KW-0812">Transmembrane</keyword>
<keyword id="KW-1133">Transmembrane helix</keyword>